<accession>Q57PF4</accession>
<gene>
    <name evidence="1" type="primary">mdtI</name>
    <name type="ordered locus">SCH_1501</name>
</gene>
<name>MDTI_SALCH</name>
<organism>
    <name type="scientific">Salmonella choleraesuis (strain SC-B67)</name>
    <dbReference type="NCBI Taxonomy" id="321314"/>
    <lineage>
        <taxon>Bacteria</taxon>
        <taxon>Pseudomonadati</taxon>
        <taxon>Pseudomonadota</taxon>
        <taxon>Gammaproteobacteria</taxon>
        <taxon>Enterobacterales</taxon>
        <taxon>Enterobacteriaceae</taxon>
        <taxon>Salmonella</taxon>
    </lineage>
</organism>
<comment type="function">
    <text evidence="1">Catalyzes the excretion of spermidine.</text>
</comment>
<comment type="subunit">
    <text evidence="1">Forms a complex with MdtJ.</text>
</comment>
<comment type="subcellular location">
    <subcellularLocation>
        <location evidence="1">Cell inner membrane</location>
        <topology evidence="1">Multi-pass membrane protein</topology>
    </subcellularLocation>
</comment>
<comment type="similarity">
    <text evidence="1">Belongs to the drug/metabolite transporter (DMT) superfamily. Small multidrug resistance (SMR) (TC 2.A.7.1) family. MdtI subfamily.</text>
</comment>
<protein>
    <recommendedName>
        <fullName evidence="1">Spermidine export protein MdtI</fullName>
    </recommendedName>
</protein>
<dbReference type="EMBL" id="AE017220">
    <property type="protein sequence ID" value="AAX65407.1"/>
    <property type="molecule type" value="Genomic_DNA"/>
</dbReference>
<dbReference type="RefSeq" id="WP_001183821.1">
    <property type="nucleotide sequence ID" value="NC_006905.1"/>
</dbReference>
<dbReference type="SMR" id="Q57PF4"/>
<dbReference type="KEGG" id="sec:SCH_1501"/>
<dbReference type="HOGENOM" id="CLU_133067_0_4_6"/>
<dbReference type="Proteomes" id="UP000000538">
    <property type="component" value="Chromosome"/>
</dbReference>
<dbReference type="GO" id="GO:0005886">
    <property type="term" value="C:plasma membrane"/>
    <property type="evidence" value="ECO:0007669"/>
    <property type="project" value="UniProtKB-SubCell"/>
</dbReference>
<dbReference type="GO" id="GO:0015199">
    <property type="term" value="F:amino-acid betaine transmembrane transporter activity"/>
    <property type="evidence" value="ECO:0007669"/>
    <property type="project" value="TreeGrafter"/>
</dbReference>
<dbReference type="GO" id="GO:0015297">
    <property type="term" value="F:antiporter activity"/>
    <property type="evidence" value="ECO:0007669"/>
    <property type="project" value="TreeGrafter"/>
</dbReference>
<dbReference type="GO" id="GO:0015220">
    <property type="term" value="F:choline transmembrane transporter activity"/>
    <property type="evidence" value="ECO:0007669"/>
    <property type="project" value="TreeGrafter"/>
</dbReference>
<dbReference type="GO" id="GO:0015606">
    <property type="term" value="F:spermidine transmembrane transporter activity"/>
    <property type="evidence" value="ECO:0007669"/>
    <property type="project" value="UniProtKB-UniRule"/>
</dbReference>
<dbReference type="GO" id="GO:0031460">
    <property type="term" value="P:glycine betaine transport"/>
    <property type="evidence" value="ECO:0007669"/>
    <property type="project" value="TreeGrafter"/>
</dbReference>
<dbReference type="FunFam" id="1.10.3730.20:FF:000001">
    <property type="entry name" value="Quaternary ammonium compound resistance transporter SugE"/>
    <property type="match status" value="1"/>
</dbReference>
<dbReference type="Gene3D" id="1.10.3730.20">
    <property type="match status" value="1"/>
</dbReference>
<dbReference type="HAMAP" id="MF_01597">
    <property type="entry name" value="MdtI"/>
    <property type="match status" value="1"/>
</dbReference>
<dbReference type="InterPro" id="IPR000390">
    <property type="entry name" value="Small_drug/metabolite_transptr"/>
</dbReference>
<dbReference type="InterPro" id="IPR045324">
    <property type="entry name" value="Small_multidrug_res"/>
</dbReference>
<dbReference type="InterPro" id="IPR023737">
    <property type="entry name" value="Spermidine_export_MdtI"/>
</dbReference>
<dbReference type="NCBIfam" id="NF007934">
    <property type="entry name" value="PRK10650.1"/>
    <property type="match status" value="1"/>
</dbReference>
<dbReference type="PANTHER" id="PTHR30561">
    <property type="entry name" value="SMR FAMILY PROTON-DEPENDENT DRUG EFFLUX TRANSPORTER SUGE"/>
    <property type="match status" value="1"/>
</dbReference>
<dbReference type="PANTHER" id="PTHR30561:SF6">
    <property type="entry name" value="SPERMIDINE EXPORT PROTEIN MDTI"/>
    <property type="match status" value="1"/>
</dbReference>
<dbReference type="Pfam" id="PF00893">
    <property type="entry name" value="Multi_Drug_Res"/>
    <property type="match status" value="1"/>
</dbReference>
<dbReference type="SUPFAM" id="SSF103481">
    <property type="entry name" value="Multidrug resistance efflux transporter EmrE"/>
    <property type="match status" value="1"/>
</dbReference>
<sequence>MQQFEWIHGAWLGLAIMLEIAANVLLKFSDGFRRKCYGILSLAAVLAAFSALSQAVKGIDLSVAYALWGGFGIAATLAAGWVLFGQRLNPKGWVGVILLLAGMVMIKFA</sequence>
<proteinExistence type="inferred from homology"/>
<feature type="chain" id="PRO_0000331145" description="Spermidine export protein MdtI">
    <location>
        <begin position="1"/>
        <end position="109"/>
    </location>
</feature>
<feature type="transmembrane region" description="Helical" evidence="1">
    <location>
        <begin position="6"/>
        <end position="26"/>
    </location>
</feature>
<feature type="transmembrane region" description="Helical" evidence="1">
    <location>
        <begin position="36"/>
        <end position="56"/>
    </location>
</feature>
<feature type="transmembrane region" description="Helical" evidence="1">
    <location>
        <begin position="64"/>
        <end position="84"/>
    </location>
</feature>
<feature type="transmembrane region" description="Helical" evidence="1">
    <location>
        <begin position="88"/>
        <end position="108"/>
    </location>
</feature>
<evidence type="ECO:0000255" key="1">
    <source>
        <dbReference type="HAMAP-Rule" id="MF_01597"/>
    </source>
</evidence>
<reference key="1">
    <citation type="journal article" date="2005" name="Nucleic Acids Res.">
        <title>The genome sequence of Salmonella enterica serovar Choleraesuis, a highly invasive and resistant zoonotic pathogen.</title>
        <authorList>
            <person name="Chiu C.-H."/>
            <person name="Tang P."/>
            <person name="Chu C."/>
            <person name="Hu S."/>
            <person name="Bao Q."/>
            <person name="Yu J."/>
            <person name="Chou Y.-Y."/>
            <person name="Wang H.-S."/>
            <person name="Lee Y.-S."/>
        </authorList>
    </citation>
    <scope>NUCLEOTIDE SEQUENCE [LARGE SCALE GENOMIC DNA]</scope>
    <source>
        <strain>SC-B67</strain>
    </source>
</reference>
<keyword id="KW-0997">Cell inner membrane</keyword>
<keyword id="KW-1003">Cell membrane</keyword>
<keyword id="KW-0472">Membrane</keyword>
<keyword id="KW-0812">Transmembrane</keyword>
<keyword id="KW-1133">Transmembrane helix</keyword>
<keyword id="KW-0813">Transport</keyword>